<dbReference type="EC" id="3.4.17.-"/>
<dbReference type="EMBL" id="AF000953">
    <property type="protein sequence ID" value="AAB96576.1"/>
    <property type="molecule type" value="Genomic_DNA"/>
</dbReference>
<dbReference type="EMBL" id="AAAB01008980">
    <property type="protein sequence ID" value="EAA13787.2"/>
    <property type="molecule type" value="Genomic_DNA"/>
</dbReference>
<dbReference type="RefSeq" id="XP_318615.2">
    <property type="nucleotide sequence ID" value="XM_318615.2"/>
</dbReference>
<dbReference type="SMR" id="O02350"/>
<dbReference type="FunCoup" id="O02350">
    <property type="interactions" value="32"/>
</dbReference>
<dbReference type="MEROPS" id="M14.A08"/>
<dbReference type="PaxDb" id="7165-AGAP009593-PA"/>
<dbReference type="EnsemblMetazoa" id="AGAP009593-RA">
    <property type="protein sequence ID" value="AGAP009593-PA"/>
    <property type="gene ID" value="AGAP009593"/>
</dbReference>
<dbReference type="KEGG" id="aga:1278958"/>
<dbReference type="VEuPathDB" id="VectorBase:AGAMI1_011637"/>
<dbReference type="VEuPathDB" id="VectorBase:AGAP029977"/>
<dbReference type="eggNOG" id="KOG2650">
    <property type="taxonomic scope" value="Eukaryota"/>
</dbReference>
<dbReference type="HOGENOM" id="CLU_019326_2_1_1"/>
<dbReference type="InParanoid" id="O02350"/>
<dbReference type="OMA" id="MYKVNSE"/>
<dbReference type="PhylomeDB" id="O02350"/>
<dbReference type="Proteomes" id="UP000007062">
    <property type="component" value="Chromosome 3R"/>
</dbReference>
<dbReference type="GO" id="GO:0005615">
    <property type="term" value="C:extracellular space"/>
    <property type="evidence" value="ECO:0000250"/>
    <property type="project" value="UniProtKB"/>
</dbReference>
<dbReference type="GO" id="GO:0004181">
    <property type="term" value="F:metallocarboxypeptidase activity"/>
    <property type="evidence" value="ECO:0000318"/>
    <property type="project" value="GO_Central"/>
</dbReference>
<dbReference type="GO" id="GO:0008270">
    <property type="term" value="F:zinc ion binding"/>
    <property type="evidence" value="ECO:0007669"/>
    <property type="project" value="InterPro"/>
</dbReference>
<dbReference type="GO" id="GO:0007586">
    <property type="term" value="P:digestion"/>
    <property type="evidence" value="ECO:0000303"/>
    <property type="project" value="UniProtKB"/>
</dbReference>
<dbReference type="GO" id="GO:0006508">
    <property type="term" value="P:proteolysis"/>
    <property type="evidence" value="ECO:0000318"/>
    <property type="project" value="GO_Central"/>
</dbReference>
<dbReference type="CDD" id="cd03860">
    <property type="entry name" value="M14_CP_A-B_like"/>
    <property type="match status" value="1"/>
</dbReference>
<dbReference type="FunFam" id="3.30.70.340:FF:000002">
    <property type="entry name" value="Carboxypeptidase A"/>
    <property type="match status" value="1"/>
</dbReference>
<dbReference type="FunFam" id="3.40.630.10:FF:000040">
    <property type="entry name" value="zinc carboxypeptidase"/>
    <property type="match status" value="1"/>
</dbReference>
<dbReference type="Gene3D" id="3.30.70.340">
    <property type="entry name" value="Metallocarboxypeptidase-like"/>
    <property type="match status" value="1"/>
</dbReference>
<dbReference type="Gene3D" id="3.40.630.10">
    <property type="entry name" value="Zn peptidases"/>
    <property type="match status" value="1"/>
</dbReference>
<dbReference type="InterPro" id="IPR036990">
    <property type="entry name" value="M14A-like_propep"/>
</dbReference>
<dbReference type="InterPro" id="IPR003146">
    <property type="entry name" value="M14A_act_pep"/>
</dbReference>
<dbReference type="InterPro" id="IPR000834">
    <property type="entry name" value="Peptidase_M14"/>
</dbReference>
<dbReference type="PANTHER" id="PTHR11705">
    <property type="entry name" value="PROTEASE FAMILY M14 CARBOXYPEPTIDASE A,B"/>
    <property type="match status" value="1"/>
</dbReference>
<dbReference type="PANTHER" id="PTHR11705:SF156">
    <property type="entry name" value="RH39904P-RELATED"/>
    <property type="match status" value="1"/>
</dbReference>
<dbReference type="Pfam" id="PF00246">
    <property type="entry name" value="Peptidase_M14"/>
    <property type="match status" value="1"/>
</dbReference>
<dbReference type="Pfam" id="PF02244">
    <property type="entry name" value="Propep_M14"/>
    <property type="match status" value="1"/>
</dbReference>
<dbReference type="PRINTS" id="PR00765">
    <property type="entry name" value="CRBOXYPTASEA"/>
</dbReference>
<dbReference type="SMART" id="SM00631">
    <property type="entry name" value="Zn_pept"/>
    <property type="match status" value="1"/>
</dbReference>
<dbReference type="SUPFAM" id="SSF54897">
    <property type="entry name" value="Protease propeptides/inhibitors"/>
    <property type="match status" value="1"/>
</dbReference>
<dbReference type="SUPFAM" id="SSF53187">
    <property type="entry name" value="Zn-dependent exopeptidases"/>
    <property type="match status" value="1"/>
</dbReference>
<dbReference type="PROSITE" id="PS00132">
    <property type="entry name" value="CARBOXYPEPT_ZN_1"/>
    <property type="match status" value="1"/>
</dbReference>
<dbReference type="PROSITE" id="PS00133">
    <property type="entry name" value="CARBOXYPEPT_ZN_2"/>
    <property type="match status" value="1"/>
</dbReference>
<dbReference type="PROSITE" id="PS52035">
    <property type="entry name" value="PEPTIDASE_M14"/>
    <property type="match status" value="1"/>
</dbReference>
<accession>O02350</accession>
<accession>Q7Q1X1</accession>
<keyword id="KW-0121">Carboxypeptidase</keyword>
<keyword id="KW-1015">Disulfide bond</keyword>
<keyword id="KW-0378">Hydrolase</keyword>
<keyword id="KW-0479">Metal-binding</keyword>
<keyword id="KW-0482">Metalloprotease</keyword>
<keyword id="KW-0645">Protease</keyword>
<keyword id="KW-1185">Reference proteome</keyword>
<keyword id="KW-0964">Secreted</keyword>
<keyword id="KW-0732">Signal</keyword>
<keyword id="KW-0862">Zinc</keyword>
<evidence type="ECO:0000250" key="1"/>
<evidence type="ECO:0000250" key="2">
    <source>
        <dbReference type="UniProtKB" id="P00730"/>
    </source>
</evidence>
<evidence type="ECO:0000255" key="3"/>
<evidence type="ECO:0000255" key="4">
    <source>
        <dbReference type="PROSITE-ProRule" id="PRU01379"/>
    </source>
</evidence>
<evidence type="ECO:0000269" key="5">
    <source>
    </source>
</evidence>
<evidence type="ECO:0000305" key="6"/>
<comment type="function">
    <text evidence="6">Involved in the digestion of the blood meal.</text>
</comment>
<comment type="cofactor">
    <cofactor evidence="2">
        <name>Zn(2+)</name>
        <dbReference type="ChEBI" id="CHEBI:29105"/>
    </cofactor>
</comment>
<comment type="subcellular location">
    <subcellularLocation>
        <location evidence="5">Secreted</location>
    </subcellularLocation>
</comment>
<comment type="tissue specificity">
    <text evidence="5">Expressed in the posterior midgut in pupae and female adults.</text>
</comment>
<comment type="induction">
    <text evidence="5">By blood meal, 10 fold increase within 10 hours.</text>
</comment>
<comment type="similarity">
    <text evidence="6">Belongs to the peptidase M14 family.</text>
</comment>
<feature type="signal peptide" evidence="3">
    <location>
        <begin position="1"/>
        <end position="28"/>
    </location>
</feature>
<feature type="chain" id="PRO_0000004406" description="Zinc carboxypeptidase A 1">
    <location>
        <begin position="29"/>
        <end position="433"/>
    </location>
</feature>
<feature type="domain" description="Peptidase M14" evidence="4">
    <location>
        <begin position="130"/>
        <end position="423"/>
    </location>
</feature>
<feature type="active site" description="Proton donor/acceptor" evidence="4">
    <location>
        <position position="387"/>
    </location>
</feature>
<feature type="binding site" evidence="4">
    <location>
        <position position="187"/>
    </location>
    <ligand>
        <name>Zn(2+)</name>
        <dbReference type="ChEBI" id="CHEBI:29105"/>
        <note>catalytic</note>
    </ligand>
</feature>
<feature type="binding site" evidence="4">
    <location>
        <position position="190"/>
    </location>
    <ligand>
        <name>Zn(2+)</name>
        <dbReference type="ChEBI" id="CHEBI:29105"/>
        <note>catalytic</note>
    </ligand>
</feature>
<feature type="binding site" evidence="4">
    <location>
        <position position="312"/>
    </location>
    <ligand>
        <name>Zn(2+)</name>
        <dbReference type="ChEBI" id="CHEBI:29105"/>
        <note>catalytic</note>
    </ligand>
</feature>
<feature type="disulfide bond" evidence="1">
    <location>
        <begin position="253"/>
        <end position="276"/>
    </location>
</feature>
<feature type="sequence conflict" description="In Ref. 1; AAB96576." evidence="6" ref="1">
    <original>A</original>
    <variation>V</variation>
    <location>
        <position position="8"/>
    </location>
</feature>
<feature type="sequence conflict" description="In Ref. 1; AAB96576." evidence="6" ref="1">
    <original>H</original>
    <variation>D</variation>
    <location>
        <position position="324"/>
    </location>
</feature>
<feature type="sequence conflict" description="In Ref. 1; AAB96576." evidence="6" ref="1">
    <original>EHSP</original>
    <variation>AHCG</variation>
    <location>
        <begin position="327"/>
        <end position="330"/>
    </location>
</feature>
<feature type="sequence conflict" description="In Ref. 1; AAB96576." evidence="6" ref="1">
    <original>Y</original>
    <variation>I</variation>
    <location>
        <position position="360"/>
    </location>
</feature>
<proteinExistence type="evidence at transcript level"/>
<protein>
    <recommendedName>
        <fullName>Zinc carboxypeptidase A 1</fullName>
        <ecNumber>3.4.17.-</ecNumber>
    </recommendedName>
    <alternativeName>
        <fullName>AgCP</fullName>
    </alternativeName>
</protein>
<reference key="1">
    <citation type="journal article" date="1997" name="Insect Biochem. Mol. Biol.">
        <title>Rapid induction by a blood meal of a carboxypeptidase gene in the gut of the mosquito Anopheles gambiae.</title>
        <authorList>
            <person name="Edwards M.J."/>
            <person name="Lemos F.J."/>
            <person name="Donnelly-Doman M."/>
            <person name="Jacobs-Lorena M."/>
        </authorList>
    </citation>
    <scope>NUCLEOTIDE SEQUENCE [GENOMIC DNA]</scope>
    <scope>SUBCELLULAR LOCATION</scope>
    <scope>TISSUE SPECIFICITY</scope>
    <scope>INDUCTION</scope>
    <source>
        <strain>G3</strain>
    </source>
</reference>
<reference key="2">
    <citation type="journal article" date="2002" name="Science">
        <title>The genome sequence of the malaria mosquito Anopheles gambiae.</title>
        <authorList>
            <person name="Holt R.A."/>
            <person name="Subramanian G.M."/>
            <person name="Halpern A."/>
            <person name="Sutton G.G."/>
            <person name="Charlab R."/>
            <person name="Nusskern D.R."/>
            <person name="Wincker P."/>
            <person name="Clark A.G."/>
            <person name="Ribeiro J.M.C."/>
            <person name="Wides R."/>
            <person name="Salzberg S.L."/>
            <person name="Loftus B.J."/>
            <person name="Yandell M.D."/>
            <person name="Majoros W.H."/>
            <person name="Rusch D.B."/>
            <person name="Lai Z."/>
            <person name="Kraft C.L."/>
            <person name="Abril J.F."/>
            <person name="Anthouard V."/>
            <person name="Arensburger P."/>
            <person name="Atkinson P.W."/>
            <person name="Baden H."/>
            <person name="de Berardinis V."/>
            <person name="Baldwin D."/>
            <person name="Benes V."/>
            <person name="Biedler J."/>
            <person name="Blass C."/>
            <person name="Bolanos R."/>
            <person name="Boscus D."/>
            <person name="Barnstead M."/>
            <person name="Cai S."/>
            <person name="Center A."/>
            <person name="Chaturverdi K."/>
            <person name="Christophides G.K."/>
            <person name="Chrystal M.A.M."/>
            <person name="Clamp M."/>
            <person name="Cravchik A."/>
            <person name="Curwen V."/>
            <person name="Dana A."/>
            <person name="Delcher A."/>
            <person name="Dew I."/>
            <person name="Evans C.A."/>
            <person name="Flanigan M."/>
            <person name="Grundschober-Freimoser A."/>
            <person name="Friedli L."/>
            <person name="Gu Z."/>
            <person name="Guan P."/>
            <person name="Guigo R."/>
            <person name="Hillenmeyer M.E."/>
            <person name="Hladun S.L."/>
            <person name="Hogan J.R."/>
            <person name="Hong Y.S."/>
            <person name="Hoover J."/>
            <person name="Jaillon O."/>
            <person name="Ke Z."/>
            <person name="Kodira C.D."/>
            <person name="Kokoza E."/>
            <person name="Koutsos A."/>
            <person name="Letunic I."/>
            <person name="Levitsky A.A."/>
            <person name="Liang Y."/>
            <person name="Lin J.-J."/>
            <person name="Lobo N.F."/>
            <person name="Lopez J.R."/>
            <person name="Malek J.A."/>
            <person name="McIntosh T.C."/>
            <person name="Meister S."/>
            <person name="Miller J.R."/>
            <person name="Mobarry C."/>
            <person name="Mongin E."/>
            <person name="Murphy S.D."/>
            <person name="O'Brochta D.A."/>
            <person name="Pfannkoch C."/>
            <person name="Qi R."/>
            <person name="Regier M.A."/>
            <person name="Remington K."/>
            <person name="Shao H."/>
            <person name="Sharakhova M.V."/>
            <person name="Sitter C.D."/>
            <person name="Shetty J."/>
            <person name="Smith T.J."/>
            <person name="Strong R."/>
            <person name="Sun J."/>
            <person name="Thomasova D."/>
            <person name="Ton L.Q."/>
            <person name="Topalis P."/>
            <person name="Tu Z.J."/>
            <person name="Unger M.F."/>
            <person name="Walenz B."/>
            <person name="Wang A.H."/>
            <person name="Wang J."/>
            <person name="Wang M."/>
            <person name="Wang X."/>
            <person name="Woodford K.J."/>
            <person name="Wortman J.R."/>
            <person name="Wu M."/>
            <person name="Yao A."/>
            <person name="Zdobnov E.M."/>
            <person name="Zhang H."/>
            <person name="Zhao Q."/>
            <person name="Zhao S."/>
            <person name="Zhu S.C."/>
            <person name="Zhimulev I."/>
            <person name="Coluzzi M."/>
            <person name="della Torre A."/>
            <person name="Roth C.W."/>
            <person name="Louis C."/>
            <person name="Kalush F."/>
            <person name="Mural R.J."/>
            <person name="Myers E.W."/>
            <person name="Adams M.D."/>
            <person name="Smith H.O."/>
            <person name="Broder S."/>
            <person name="Gardner M.J."/>
            <person name="Fraser C.M."/>
            <person name="Birney E."/>
            <person name="Bork P."/>
            <person name="Brey P.T."/>
            <person name="Venter J.C."/>
            <person name="Weissenbach J."/>
            <person name="Kafatos F.C."/>
            <person name="Collins F.H."/>
            <person name="Hoffman S.L."/>
        </authorList>
    </citation>
    <scope>NUCLEOTIDE SEQUENCE [LARGE SCALE GENOMIC DNA]</scope>
    <source>
        <strain>PEST</strain>
    </source>
</reference>
<sequence>MVRLNSAAGSRWWAPAMAILAVALSVEAAEVARYDNYRLYRVTPHSEAQLRSVAAMEQASDSLIFLETARKLGDRFDIVVAPHKLADFTETLESDYIPHELIEQNVQRAFDEERVRLTNKRAKGPFDWNDYHTLEEIHAWLDQLASEHPKEVELLDAGRSHQNRTMKGVKLSYGPGRPGVFLEGGIHAREWISPATVTYILNQLLTSEDAKVRALAEKFDWYVFPNANPDGYAYTFQVNRLWRKTRKAYGPFCYGADPNRNWDFHWAEQGTSNNACSDTYHGSEAFSEVETRSLAAFVEKLRGKLGAYIAFHSYSQLLLFPYGHTGEHSPNHQDLNEIAEATVKSLAKRYGTQYKYGNVYDAIYPASGSSVDWSYGAQDVKIAYTYELRPDGDAWNGFVLPPNEIVPTGEETLDSLITLLEESSARGYYDEKH</sequence>
<name>CBPA1_ANOGA</name>
<organism>
    <name type="scientific">Anopheles gambiae</name>
    <name type="common">African malaria mosquito</name>
    <dbReference type="NCBI Taxonomy" id="7165"/>
    <lineage>
        <taxon>Eukaryota</taxon>
        <taxon>Metazoa</taxon>
        <taxon>Ecdysozoa</taxon>
        <taxon>Arthropoda</taxon>
        <taxon>Hexapoda</taxon>
        <taxon>Insecta</taxon>
        <taxon>Pterygota</taxon>
        <taxon>Neoptera</taxon>
        <taxon>Endopterygota</taxon>
        <taxon>Diptera</taxon>
        <taxon>Nematocera</taxon>
        <taxon>Culicoidea</taxon>
        <taxon>Culicidae</taxon>
        <taxon>Anophelinae</taxon>
        <taxon>Anopheles</taxon>
    </lineage>
</organism>
<gene>
    <name type="ORF">AGAP009593</name>
</gene>